<name>PSTB_METMP</name>
<comment type="function">
    <text evidence="1">Part of the ABC transporter complex PstSACB involved in phosphate import. Responsible for energy coupling to the transport system.</text>
</comment>
<comment type="catalytic activity">
    <reaction evidence="1">
        <text>phosphate(out) + ATP + H2O = ADP + 2 phosphate(in) + H(+)</text>
        <dbReference type="Rhea" id="RHEA:24440"/>
        <dbReference type="ChEBI" id="CHEBI:15377"/>
        <dbReference type="ChEBI" id="CHEBI:15378"/>
        <dbReference type="ChEBI" id="CHEBI:30616"/>
        <dbReference type="ChEBI" id="CHEBI:43474"/>
        <dbReference type="ChEBI" id="CHEBI:456216"/>
        <dbReference type="EC" id="7.3.2.1"/>
    </reaction>
</comment>
<comment type="subunit">
    <text evidence="1">The complex is composed of two ATP-binding proteins (PstB), two transmembrane proteins (PstC and PstA) and a solute-binding protein (PstS).</text>
</comment>
<comment type="subcellular location">
    <subcellularLocation>
        <location evidence="1">Cell membrane</location>
        <topology evidence="1">Peripheral membrane protein</topology>
    </subcellularLocation>
</comment>
<comment type="similarity">
    <text evidence="1">Belongs to the ABC transporter superfamily. Phosphate importer (TC 3.A.1.7) family.</text>
</comment>
<accession>Q6LY93</accession>
<evidence type="ECO:0000255" key="1">
    <source>
        <dbReference type="HAMAP-Rule" id="MF_01702"/>
    </source>
</evidence>
<sequence length="251" mass="28619">MKIKMNSKDVNFWYGEKKALNDINLPIYENKITALIGPSGCGKSTFLRCLNRMNDLISGVKITGEITLDEKNIYDKDVDVVELRKRVGMVFQKPNPFPMSIYDNIAYGPRIHGIKDKKQLDEIVEWALKKSALWDDVKEDLKKSALKLSGGQQQRLCIARTIAVKPDVILMDEPCSALDPISTLKIEDLMVELKKEYTIVIVTHNMQQASRVSDYTGFFMLGDLVEFNKTDKLFVEPENKKTEDYISGRFG</sequence>
<feature type="chain" id="PRO_0000272587" description="Phosphate import ATP-binding protein PstB">
    <location>
        <begin position="1"/>
        <end position="251"/>
    </location>
</feature>
<feature type="domain" description="ABC transporter" evidence="1">
    <location>
        <begin position="5"/>
        <end position="246"/>
    </location>
</feature>
<feature type="binding site" evidence="1">
    <location>
        <begin position="37"/>
        <end position="44"/>
    </location>
    <ligand>
        <name>ATP</name>
        <dbReference type="ChEBI" id="CHEBI:30616"/>
    </ligand>
</feature>
<gene>
    <name evidence="1" type="primary">pstB</name>
    <name type="ordered locus">MMP1098</name>
</gene>
<proteinExistence type="inferred from homology"/>
<organism>
    <name type="scientific">Methanococcus maripaludis (strain DSM 14266 / JCM 13030 / NBRC 101832 / S2 / LL)</name>
    <dbReference type="NCBI Taxonomy" id="267377"/>
    <lineage>
        <taxon>Archaea</taxon>
        <taxon>Methanobacteriati</taxon>
        <taxon>Methanobacteriota</taxon>
        <taxon>Methanomada group</taxon>
        <taxon>Methanococci</taxon>
        <taxon>Methanococcales</taxon>
        <taxon>Methanococcaceae</taxon>
        <taxon>Methanococcus</taxon>
    </lineage>
</organism>
<dbReference type="EC" id="7.3.2.1" evidence="1"/>
<dbReference type="EMBL" id="BX950229">
    <property type="protein sequence ID" value="CAF30654.1"/>
    <property type="molecule type" value="Genomic_DNA"/>
</dbReference>
<dbReference type="RefSeq" id="WP_011171042.1">
    <property type="nucleotide sequence ID" value="NC_005791.1"/>
</dbReference>
<dbReference type="SMR" id="Q6LY93"/>
<dbReference type="STRING" id="267377.MMP1098"/>
<dbReference type="EnsemblBacteria" id="CAF30654">
    <property type="protein sequence ID" value="CAF30654"/>
    <property type="gene ID" value="MMP1098"/>
</dbReference>
<dbReference type="GeneID" id="2761654"/>
<dbReference type="KEGG" id="mmp:MMP1098"/>
<dbReference type="PATRIC" id="fig|267377.15.peg.1131"/>
<dbReference type="eggNOG" id="arCOG00231">
    <property type="taxonomic scope" value="Archaea"/>
</dbReference>
<dbReference type="HOGENOM" id="CLU_000604_1_22_2"/>
<dbReference type="OrthoDB" id="31298at2157"/>
<dbReference type="Proteomes" id="UP000000590">
    <property type="component" value="Chromosome"/>
</dbReference>
<dbReference type="GO" id="GO:0005886">
    <property type="term" value="C:plasma membrane"/>
    <property type="evidence" value="ECO:0007669"/>
    <property type="project" value="UniProtKB-SubCell"/>
</dbReference>
<dbReference type="GO" id="GO:0005524">
    <property type="term" value="F:ATP binding"/>
    <property type="evidence" value="ECO:0007669"/>
    <property type="project" value="UniProtKB-KW"/>
</dbReference>
<dbReference type="GO" id="GO:0016887">
    <property type="term" value="F:ATP hydrolysis activity"/>
    <property type="evidence" value="ECO:0007669"/>
    <property type="project" value="InterPro"/>
</dbReference>
<dbReference type="GO" id="GO:0015415">
    <property type="term" value="F:ATPase-coupled phosphate ion transmembrane transporter activity"/>
    <property type="evidence" value="ECO:0007669"/>
    <property type="project" value="UniProtKB-EC"/>
</dbReference>
<dbReference type="GO" id="GO:0035435">
    <property type="term" value="P:phosphate ion transmembrane transport"/>
    <property type="evidence" value="ECO:0007669"/>
    <property type="project" value="InterPro"/>
</dbReference>
<dbReference type="CDD" id="cd03260">
    <property type="entry name" value="ABC_PstB_phosphate_transporter"/>
    <property type="match status" value="1"/>
</dbReference>
<dbReference type="FunFam" id="3.40.50.300:FF:000132">
    <property type="entry name" value="Phosphate import ATP-binding protein PstB"/>
    <property type="match status" value="1"/>
</dbReference>
<dbReference type="Gene3D" id="3.40.50.300">
    <property type="entry name" value="P-loop containing nucleotide triphosphate hydrolases"/>
    <property type="match status" value="1"/>
</dbReference>
<dbReference type="InterPro" id="IPR003593">
    <property type="entry name" value="AAA+_ATPase"/>
</dbReference>
<dbReference type="InterPro" id="IPR003439">
    <property type="entry name" value="ABC_transporter-like_ATP-bd"/>
</dbReference>
<dbReference type="InterPro" id="IPR017871">
    <property type="entry name" value="ABC_transporter-like_CS"/>
</dbReference>
<dbReference type="InterPro" id="IPR027417">
    <property type="entry name" value="P-loop_NTPase"/>
</dbReference>
<dbReference type="InterPro" id="IPR005670">
    <property type="entry name" value="PstB-like"/>
</dbReference>
<dbReference type="NCBIfam" id="TIGR00972">
    <property type="entry name" value="3a0107s01c2"/>
    <property type="match status" value="1"/>
</dbReference>
<dbReference type="PANTHER" id="PTHR43423">
    <property type="entry name" value="ABC TRANSPORTER I FAMILY MEMBER 17"/>
    <property type="match status" value="1"/>
</dbReference>
<dbReference type="PANTHER" id="PTHR43423:SF1">
    <property type="entry name" value="ABC TRANSPORTER I FAMILY MEMBER 17"/>
    <property type="match status" value="1"/>
</dbReference>
<dbReference type="Pfam" id="PF00005">
    <property type="entry name" value="ABC_tran"/>
    <property type="match status" value="1"/>
</dbReference>
<dbReference type="SMART" id="SM00382">
    <property type="entry name" value="AAA"/>
    <property type="match status" value="1"/>
</dbReference>
<dbReference type="SUPFAM" id="SSF52540">
    <property type="entry name" value="P-loop containing nucleoside triphosphate hydrolases"/>
    <property type="match status" value="1"/>
</dbReference>
<dbReference type="PROSITE" id="PS00211">
    <property type="entry name" value="ABC_TRANSPORTER_1"/>
    <property type="match status" value="1"/>
</dbReference>
<dbReference type="PROSITE" id="PS50893">
    <property type="entry name" value="ABC_TRANSPORTER_2"/>
    <property type="match status" value="1"/>
</dbReference>
<dbReference type="PROSITE" id="PS51238">
    <property type="entry name" value="PSTB"/>
    <property type="match status" value="1"/>
</dbReference>
<keyword id="KW-0067">ATP-binding</keyword>
<keyword id="KW-1003">Cell membrane</keyword>
<keyword id="KW-0472">Membrane</keyword>
<keyword id="KW-0547">Nucleotide-binding</keyword>
<keyword id="KW-0592">Phosphate transport</keyword>
<keyword id="KW-1185">Reference proteome</keyword>
<keyword id="KW-1278">Translocase</keyword>
<keyword id="KW-0813">Transport</keyword>
<reference key="1">
    <citation type="journal article" date="2004" name="J. Bacteriol.">
        <title>Complete genome sequence of the genetically tractable hydrogenotrophic methanogen Methanococcus maripaludis.</title>
        <authorList>
            <person name="Hendrickson E.L."/>
            <person name="Kaul R."/>
            <person name="Zhou Y."/>
            <person name="Bovee D."/>
            <person name="Chapman P."/>
            <person name="Chung J."/>
            <person name="Conway de Macario E."/>
            <person name="Dodsworth J.A."/>
            <person name="Gillett W."/>
            <person name="Graham D.E."/>
            <person name="Hackett M."/>
            <person name="Haydock A.K."/>
            <person name="Kang A."/>
            <person name="Land M.L."/>
            <person name="Levy R."/>
            <person name="Lie T.J."/>
            <person name="Major T.A."/>
            <person name="Moore B.C."/>
            <person name="Porat I."/>
            <person name="Palmeiri A."/>
            <person name="Rouse G."/>
            <person name="Saenphimmachak C."/>
            <person name="Soell D."/>
            <person name="Van Dien S."/>
            <person name="Wang T."/>
            <person name="Whitman W.B."/>
            <person name="Xia Q."/>
            <person name="Zhang Y."/>
            <person name="Larimer F.W."/>
            <person name="Olson M.V."/>
            <person name="Leigh J.A."/>
        </authorList>
    </citation>
    <scope>NUCLEOTIDE SEQUENCE [LARGE SCALE GENOMIC DNA]</scope>
    <source>
        <strain>DSM 14266 / JCM 13030 / NBRC 101832 / S2 / LL</strain>
    </source>
</reference>
<protein>
    <recommendedName>
        <fullName evidence="1">Phosphate import ATP-binding protein PstB</fullName>
        <ecNumber evidence="1">7.3.2.1</ecNumber>
    </recommendedName>
    <alternativeName>
        <fullName evidence="1">ABC phosphate transporter</fullName>
    </alternativeName>
    <alternativeName>
        <fullName evidence="1">Phosphate-transporting ATPase</fullName>
    </alternativeName>
</protein>